<gene>
    <name evidence="1" type="primary">def</name>
    <name type="ordered locus">TP_0757</name>
</gene>
<comment type="function">
    <text evidence="1">Removes the formyl group from the N-terminal Met of newly synthesized proteins. Requires at least a dipeptide for an efficient rate of reaction. N-terminal L-methionine is a prerequisite for activity but the enzyme has broad specificity at other positions.</text>
</comment>
<comment type="catalytic activity">
    <reaction evidence="1">
        <text>N-terminal N-formyl-L-methionyl-[peptide] + H2O = N-terminal L-methionyl-[peptide] + formate</text>
        <dbReference type="Rhea" id="RHEA:24420"/>
        <dbReference type="Rhea" id="RHEA-COMP:10639"/>
        <dbReference type="Rhea" id="RHEA-COMP:10640"/>
        <dbReference type="ChEBI" id="CHEBI:15377"/>
        <dbReference type="ChEBI" id="CHEBI:15740"/>
        <dbReference type="ChEBI" id="CHEBI:49298"/>
        <dbReference type="ChEBI" id="CHEBI:64731"/>
        <dbReference type="EC" id="3.5.1.88"/>
    </reaction>
</comment>
<comment type="cofactor">
    <cofactor evidence="1">
        <name>Fe(2+)</name>
        <dbReference type="ChEBI" id="CHEBI:29033"/>
    </cofactor>
    <text evidence="1">Binds 1 Fe(2+) ion.</text>
</comment>
<comment type="similarity">
    <text evidence="1">Belongs to the polypeptide deformylase family.</text>
</comment>
<accession>O83738</accession>
<proteinExistence type="inferred from homology"/>
<reference key="1">
    <citation type="journal article" date="1998" name="Science">
        <title>Complete genome sequence of Treponema pallidum, the syphilis spirochete.</title>
        <authorList>
            <person name="Fraser C.M."/>
            <person name="Norris S.J."/>
            <person name="Weinstock G.M."/>
            <person name="White O."/>
            <person name="Sutton G.G."/>
            <person name="Dodson R.J."/>
            <person name="Gwinn M.L."/>
            <person name="Hickey E.K."/>
            <person name="Clayton R.A."/>
            <person name="Ketchum K.A."/>
            <person name="Sodergren E."/>
            <person name="Hardham J.M."/>
            <person name="McLeod M.P."/>
            <person name="Salzberg S.L."/>
            <person name="Peterson J.D."/>
            <person name="Khalak H.G."/>
            <person name="Richardson D.L."/>
            <person name="Howell J.K."/>
            <person name="Chidambaram M."/>
            <person name="Utterback T.R."/>
            <person name="McDonald L.A."/>
            <person name="Artiach P."/>
            <person name="Bowman C."/>
            <person name="Cotton M.D."/>
            <person name="Fujii C."/>
            <person name="Garland S.A."/>
            <person name="Hatch B."/>
            <person name="Horst K."/>
            <person name="Roberts K.M."/>
            <person name="Sandusky M."/>
            <person name="Weidman J.F."/>
            <person name="Smith H.O."/>
            <person name="Venter J.C."/>
        </authorList>
    </citation>
    <scope>NUCLEOTIDE SEQUENCE [LARGE SCALE GENOMIC DNA]</scope>
    <source>
        <strain>Nichols</strain>
    </source>
</reference>
<feature type="chain" id="PRO_0000082869" description="Peptide deformylase">
    <location>
        <begin position="1"/>
        <end position="162"/>
    </location>
</feature>
<feature type="active site" evidence="1">
    <location>
        <position position="129"/>
    </location>
</feature>
<feature type="binding site" evidence="1">
    <location>
        <position position="86"/>
    </location>
    <ligand>
        <name>Fe cation</name>
        <dbReference type="ChEBI" id="CHEBI:24875"/>
    </ligand>
</feature>
<feature type="binding site" evidence="1">
    <location>
        <position position="128"/>
    </location>
    <ligand>
        <name>Fe cation</name>
        <dbReference type="ChEBI" id="CHEBI:24875"/>
    </ligand>
</feature>
<feature type="binding site" evidence="1">
    <location>
        <position position="132"/>
    </location>
    <ligand>
        <name>Fe cation</name>
        <dbReference type="ChEBI" id="CHEBI:24875"/>
    </ligand>
</feature>
<name>DEF_TREPA</name>
<protein>
    <recommendedName>
        <fullName evidence="1">Peptide deformylase</fullName>
        <shortName evidence="1">PDF</shortName>
        <ecNumber evidence="1">3.5.1.88</ecNumber>
    </recommendedName>
    <alternativeName>
        <fullName evidence="1">Polypeptide deformylase</fullName>
    </alternativeName>
</protein>
<keyword id="KW-0378">Hydrolase</keyword>
<keyword id="KW-0408">Iron</keyword>
<keyword id="KW-0479">Metal-binding</keyword>
<keyword id="KW-0648">Protein biosynthesis</keyword>
<keyword id="KW-1185">Reference proteome</keyword>
<sequence length="162" mass="18323">MELKFLGEPCLTTVSEPVSEVDEQLRAFISGMFRVMRGAGGVGLAAPQVGRTVRVFVVDVEHHVRAFINPQITAASEEQSSYEEGCLSIPHIYERVLRPRRVSVQYLDENGKRCAVDADGILARVIQHEYDHLDGILFLDRIDEKRRDDALRRYAALRGTIR</sequence>
<evidence type="ECO:0000255" key="1">
    <source>
        <dbReference type="HAMAP-Rule" id="MF_00163"/>
    </source>
</evidence>
<organism>
    <name type="scientific">Treponema pallidum (strain Nichols)</name>
    <dbReference type="NCBI Taxonomy" id="243276"/>
    <lineage>
        <taxon>Bacteria</taxon>
        <taxon>Pseudomonadati</taxon>
        <taxon>Spirochaetota</taxon>
        <taxon>Spirochaetia</taxon>
        <taxon>Spirochaetales</taxon>
        <taxon>Treponemataceae</taxon>
        <taxon>Treponema</taxon>
    </lineage>
</organism>
<dbReference type="EC" id="3.5.1.88" evidence="1"/>
<dbReference type="EMBL" id="AE000520">
    <property type="protein sequence ID" value="AAC65724.1"/>
    <property type="molecule type" value="Genomic_DNA"/>
</dbReference>
<dbReference type="PIR" id="H71284">
    <property type="entry name" value="H71284"/>
</dbReference>
<dbReference type="RefSeq" id="WP_010882202.1">
    <property type="nucleotide sequence ID" value="NC_021490.2"/>
</dbReference>
<dbReference type="SMR" id="O83738"/>
<dbReference type="IntAct" id="O83738">
    <property type="interactions" value="40"/>
</dbReference>
<dbReference type="STRING" id="243276.TP_0757"/>
<dbReference type="EnsemblBacteria" id="AAC65724">
    <property type="protein sequence ID" value="AAC65724"/>
    <property type="gene ID" value="TP_0757"/>
</dbReference>
<dbReference type="GeneID" id="93876524"/>
<dbReference type="KEGG" id="tpa:TP_0757"/>
<dbReference type="KEGG" id="tpw:TPANIC_0757"/>
<dbReference type="eggNOG" id="COG0242">
    <property type="taxonomic scope" value="Bacteria"/>
</dbReference>
<dbReference type="HOGENOM" id="CLU_061901_2_0_12"/>
<dbReference type="OrthoDB" id="9784988at2"/>
<dbReference type="Proteomes" id="UP000000811">
    <property type="component" value="Chromosome"/>
</dbReference>
<dbReference type="GO" id="GO:0046872">
    <property type="term" value="F:metal ion binding"/>
    <property type="evidence" value="ECO:0007669"/>
    <property type="project" value="UniProtKB-KW"/>
</dbReference>
<dbReference type="GO" id="GO:0042586">
    <property type="term" value="F:peptide deformylase activity"/>
    <property type="evidence" value="ECO:0007669"/>
    <property type="project" value="UniProtKB-UniRule"/>
</dbReference>
<dbReference type="GO" id="GO:0043686">
    <property type="term" value="P:co-translational protein modification"/>
    <property type="evidence" value="ECO:0007669"/>
    <property type="project" value="TreeGrafter"/>
</dbReference>
<dbReference type="GO" id="GO:0006412">
    <property type="term" value="P:translation"/>
    <property type="evidence" value="ECO:0007669"/>
    <property type="project" value="UniProtKB-UniRule"/>
</dbReference>
<dbReference type="CDD" id="cd00487">
    <property type="entry name" value="Pep_deformylase"/>
    <property type="match status" value="1"/>
</dbReference>
<dbReference type="Gene3D" id="3.90.45.10">
    <property type="entry name" value="Peptide deformylase"/>
    <property type="match status" value="1"/>
</dbReference>
<dbReference type="HAMAP" id="MF_00163">
    <property type="entry name" value="Pep_deformylase"/>
    <property type="match status" value="1"/>
</dbReference>
<dbReference type="InterPro" id="IPR023635">
    <property type="entry name" value="Peptide_deformylase"/>
</dbReference>
<dbReference type="InterPro" id="IPR036821">
    <property type="entry name" value="Peptide_deformylase_sf"/>
</dbReference>
<dbReference type="NCBIfam" id="TIGR00079">
    <property type="entry name" value="pept_deformyl"/>
    <property type="match status" value="1"/>
</dbReference>
<dbReference type="NCBIfam" id="NF001159">
    <property type="entry name" value="PRK00150.1-3"/>
    <property type="match status" value="1"/>
</dbReference>
<dbReference type="PANTHER" id="PTHR10458">
    <property type="entry name" value="PEPTIDE DEFORMYLASE"/>
    <property type="match status" value="1"/>
</dbReference>
<dbReference type="PANTHER" id="PTHR10458:SF22">
    <property type="entry name" value="PEPTIDE DEFORMYLASE"/>
    <property type="match status" value="1"/>
</dbReference>
<dbReference type="Pfam" id="PF01327">
    <property type="entry name" value="Pep_deformylase"/>
    <property type="match status" value="1"/>
</dbReference>
<dbReference type="PIRSF" id="PIRSF004749">
    <property type="entry name" value="Pep_def"/>
    <property type="match status" value="1"/>
</dbReference>
<dbReference type="PRINTS" id="PR01576">
    <property type="entry name" value="PDEFORMYLASE"/>
</dbReference>
<dbReference type="SUPFAM" id="SSF56420">
    <property type="entry name" value="Peptide deformylase"/>
    <property type="match status" value="1"/>
</dbReference>